<organism>
    <name type="scientific">Acinetobacter baumannii</name>
    <dbReference type="NCBI Taxonomy" id="470"/>
    <lineage>
        <taxon>Bacteria</taxon>
        <taxon>Pseudomonadati</taxon>
        <taxon>Pseudomonadota</taxon>
        <taxon>Gammaproteobacteria</taxon>
        <taxon>Moraxellales</taxon>
        <taxon>Moraxellaceae</taxon>
        <taxon>Acinetobacter</taxon>
        <taxon>Acinetobacter calcoaceticus/baumannii complex</taxon>
    </lineage>
</organism>
<dbReference type="EC" id="1.16.1.10" evidence="2"/>
<dbReference type="EMBL" id="CP018664">
    <property type="protein sequence ID" value="APP29445.1"/>
    <property type="molecule type" value="Genomic_DNA"/>
</dbReference>
<dbReference type="RefSeq" id="WP_000160885.1">
    <property type="nucleotide sequence ID" value="NZ_WPIQ01000003.1"/>
</dbReference>
<dbReference type="PDB" id="7LRN">
    <property type="method" value="X-ray"/>
    <property type="resolution" value="2.85 A"/>
    <property type="chains" value="A/B=1-286"/>
</dbReference>
<dbReference type="PDBsum" id="7LRN"/>
<dbReference type="SMR" id="A0A1E3M8P2"/>
<dbReference type="Proteomes" id="UP000072389">
    <property type="component" value="Chromosome"/>
</dbReference>
<dbReference type="GO" id="GO:0000166">
    <property type="term" value="F:nucleotide binding"/>
    <property type="evidence" value="ECO:0007669"/>
    <property type="project" value="UniProtKB-KW"/>
</dbReference>
<dbReference type="GO" id="GO:0016491">
    <property type="term" value="F:oxidoreductase activity"/>
    <property type="evidence" value="ECO:0007669"/>
    <property type="project" value="InterPro"/>
</dbReference>
<dbReference type="CDD" id="cd06193">
    <property type="entry name" value="siderophore_interacting"/>
    <property type="match status" value="1"/>
</dbReference>
<dbReference type="Gene3D" id="3.40.50.80">
    <property type="entry name" value="Nucleotide-binding domain of ferredoxin-NADP reductase (FNR) module"/>
    <property type="match status" value="1"/>
</dbReference>
<dbReference type="Gene3D" id="2.40.30.10">
    <property type="entry name" value="Translation factors"/>
    <property type="match status" value="1"/>
</dbReference>
<dbReference type="InterPro" id="IPR013113">
    <property type="entry name" value="FAD-bd_9_SIP"/>
</dbReference>
<dbReference type="InterPro" id="IPR017927">
    <property type="entry name" value="FAD-bd_FR_type"/>
</dbReference>
<dbReference type="InterPro" id="IPR039261">
    <property type="entry name" value="FNR_nucleotide-bd"/>
</dbReference>
<dbReference type="InterPro" id="IPR007037">
    <property type="entry name" value="SIP_C"/>
</dbReference>
<dbReference type="InterPro" id="IPR039374">
    <property type="entry name" value="SIP_fam"/>
</dbReference>
<dbReference type="PANTHER" id="PTHR30157">
    <property type="entry name" value="FERRIC REDUCTASE, NADPH-DEPENDENT"/>
    <property type="match status" value="1"/>
</dbReference>
<dbReference type="PANTHER" id="PTHR30157:SF0">
    <property type="entry name" value="NADPH-DEPENDENT FERRIC-CHELATE REDUCTASE"/>
    <property type="match status" value="1"/>
</dbReference>
<dbReference type="Pfam" id="PF08021">
    <property type="entry name" value="FAD_binding_9"/>
    <property type="match status" value="1"/>
</dbReference>
<dbReference type="Pfam" id="PF04954">
    <property type="entry name" value="SIP"/>
    <property type="match status" value="1"/>
</dbReference>
<dbReference type="PROSITE" id="PS51384">
    <property type="entry name" value="FAD_FR"/>
    <property type="match status" value="1"/>
</dbReference>
<feature type="chain" id="PRO_0000462156" description="Ferric acinetobactin reductase">
    <location>
        <begin position="1"/>
        <end position="286"/>
    </location>
</feature>
<feature type="domain" description="FAD-binding FR-type" evidence="1">
    <location>
        <begin position="25"/>
        <end position="131"/>
    </location>
</feature>
<feature type="binding site" evidence="2 7">
    <location>
        <position position="79"/>
    </location>
    <ligand>
        <name>FAD</name>
        <dbReference type="ChEBI" id="CHEBI:57692"/>
    </ligand>
</feature>
<feature type="binding site" evidence="2 7">
    <location>
        <position position="80"/>
    </location>
    <ligand>
        <name>FAD</name>
        <dbReference type="ChEBI" id="CHEBI:57692"/>
    </ligand>
</feature>
<feature type="binding site" evidence="2 7">
    <location>
        <position position="82"/>
    </location>
    <ligand>
        <name>FAD</name>
        <dbReference type="ChEBI" id="CHEBI:57692"/>
    </ligand>
</feature>
<feature type="binding site" evidence="2 7">
    <location>
        <position position="96"/>
    </location>
    <ligand>
        <name>FAD</name>
        <dbReference type="ChEBI" id="CHEBI:57692"/>
    </ligand>
</feature>
<feature type="binding site" evidence="2 7">
    <location>
        <position position="98"/>
    </location>
    <ligand>
        <name>FAD</name>
        <dbReference type="ChEBI" id="CHEBI:57692"/>
    </ligand>
</feature>
<feature type="binding site" evidence="2 7">
    <location>
        <position position="100"/>
    </location>
    <ligand>
        <name>FAD</name>
        <dbReference type="ChEBI" id="CHEBI:57692"/>
    </ligand>
</feature>
<feature type="binding site" evidence="2 7">
    <location>
        <position position="102"/>
    </location>
    <ligand>
        <name>FAD</name>
        <dbReference type="ChEBI" id="CHEBI:57692"/>
    </ligand>
</feature>
<feature type="binding site" evidence="2 7">
    <location>
        <position position="104"/>
    </location>
    <ligand>
        <name>FAD</name>
        <dbReference type="ChEBI" id="CHEBI:57692"/>
    </ligand>
</feature>
<feature type="binding site" evidence="2 7">
    <location>
        <position position="106"/>
    </location>
    <ligand>
        <name>FAD</name>
        <dbReference type="ChEBI" id="CHEBI:57692"/>
    </ligand>
</feature>
<feature type="binding site" evidence="2 7">
    <location>
        <position position="250"/>
    </location>
    <ligand>
        <name>FAD</name>
        <dbReference type="ChEBI" id="CHEBI:57692"/>
    </ligand>
</feature>
<feature type="binding site" evidence="2 7">
    <location>
        <position position="252"/>
    </location>
    <ligand>
        <name>FAD</name>
        <dbReference type="ChEBI" id="CHEBI:57692"/>
    </ligand>
</feature>
<feature type="binding site" evidence="2 7">
    <location>
        <position position="255"/>
    </location>
    <ligand>
        <name>FAD</name>
        <dbReference type="ChEBI" id="CHEBI:57692"/>
    </ligand>
</feature>
<evidence type="ECO:0000255" key="1">
    <source>
        <dbReference type="PROSITE-ProRule" id="PRU00716"/>
    </source>
</evidence>
<evidence type="ECO:0000269" key="2">
    <source>
    </source>
</evidence>
<evidence type="ECO:0000303" key="3">
    <source>
    </source>
</evidence>
<evidence type="ECO:0000305" key="4"/>
<evidence type="ECO:0000305" key="5">
    <source>
    </source>
</evidence>
<evidence type="ECO:0000312" key="6">
    <source>
        <dbReference type="EMBL" id="APP29445.1"/>
    </source>
</evidence>
<evidence type="ECO:0007744" key="7">
    <source>
        <dbReference type="PDB" id="7LRN"/>
    </source>
</evidence>
<accession>A0A1E3M8P2</accession>
<keyword id="KW-0002">3D-structure</keyword>
<keyword id="KW-0274">FAD</keyword>
<keyword id="KW-0285">Flavoprotein</keyword>
<keyword id="KW-0520">NAD</keyword>
<keyword id="KW-0521">NADP</keyword>
<keyword id="KW-0547">Nucleotide-binding</keyword>
<keyword id="KW-0560">Oxidoreductase</keyword>
<name>BAUF_ACIBA</name>
<proteinExistence type="evidence at protein level"/>
<gene>
    <name evidence="3" type="primary">bauF</name>
    <name evidence="6" type="ORF">AUO97_00860</name>
</gene>
<protein>
    <recommendedName>
        <fullName evidence="4">Ferric acinetobactin reductase</fullName>
        <ecNumber evidence="2">1.16.1.10</ecNumber>
    </recommendedName>
    <alternativeName>
        <fullName evidence="3">Flavin-dependent siderophore-interacting protein</fullName>
        <shortName evidence="3">Flavin-dependent SIP</shortName>
    </alternativeName>
</protein>
<sequence length="286" mass="32847">MTKIAEKSKQEYGDLLKEKDHLQDMEQLEMTIVSIQTPYPSIVRIQGKINTLQPELWQAPNLAIRLIVSNPPEGQPISRVYTVRSFNPINAQIEIDFVKHEDLSPAMEWLNSAQVGTKIGLIGPRPHFIPNFTAKKHVVMFADDTAVPALYSILKQWELGISADIFIESFEKDIASQLPELEHVKIHSFHKEHHTSQKGLLLKAAFALEHYENITIWAACERNEARALRQFFLEDQQLNKNDVRIAGYWRDGVSSSELDKLRAQHYQEHIQQGKTLNEYDDLDLAN</sequence>
<reference evidence="6" key="1">
    <citation type="submission" date="2016-12" db="EMBL/GenBank/DDBJ databases">
        <authorList>
            <person name="Singh M."/>
            <person name="Fernando D."/>
            <person name="Kumar A."/>
        </authorList>
    </citation>
    <scope>NUCLEOTIDE SEQUENCE [LARGE SCALE GENOMIC DNA]</scope>
    <source>
        <strain>ATCC 17978 / DSM 105126 / CIP 53.77 / LMG 1025 / NCDC KC755 / 5377</strain>
    </source>
</reference>
<reference evidence="7" key="2">
    <citation type="journal article" date="2021" name="ACS Omega">
        <title>Structural and Biochemical Characterization of the Flavin-Dependent Siderophore-Interacting Protein from Acinetobacter baumannii.</title>
        <authorList>
            <person name="Valentino H."/>
            <person name="Korasick D.A."/>
            <person name="Bohac T.J."/>
            <person name="Shapiro J.A."/>
            <person name="Wencewicz T.A."/>
            <person name="Tanner J.J."/>
            <person name="Sobrado P."/>
        </authorList>
    </citation>
    <scope>X-RAY CRYSTALLOGRAPHY (2.85 ANGSTROMS) IN COMPLEX WITH FAD</scope>
    <scope>FUNCTION</scope>
    <scope>CATALYTIC ACTIVITY</scope>
    <scope>COFACTOR</scope>
    <source>
        <strain>ATCC 17978 / DSM 105126 / CIP 53.77 / LMG 1025 / NCDC KC755 / 5377</strain>
    </source>
</reference>
<comment type="function">
    <text evidence="2">Ferric-siderophore reductase involved in iron removal from the siderophores after their transport into the cell (PubMed:34308084). Interacts with the siderophores acinetobactin (Acb) and preacinetobactin (pre-Acb) and catalyzes the reduction of the ferric iron bound to the siderophores to ferrous iron, resulting in destabilization of the siderophore chelation complex and entrance of ferrous iron into the intracellular pool of bioavailable metals (PubMed:34308084). Can use NADH and NADPH as electron donors in vitro, but the reduction rate is very slow, suggesting that NADH and NADPH are not the physiological partners of BauF (PubMed:34308084).</text>
</comment>
<comment type="catalytic activity">
    <reaction evidence="2">
        <text>2 a Fe(II)-siderophore + NAD(+) + H(+) = 2 a Fe(III)-siderophore + NADH</text>
        <dbReference type="Rhea" id="RHEA:15061"/>
        <dbReference type="Rhea" id="RHEA-COMP:11342"/>
        <dbReference type="Rhea" id="RHEA-COMP:11344"/>
        <dbReference type="ChEBI" id="CHEBI:15378"/>
        <dbReference type="ChEBI" id="CHEBI:29033"/>
        <dbReference type="ChEBI" id="CHEBI:29034"/>
        <dbReference type="ChEBI" id="CHEBI:57540"/>
        <dbReference type="ChEBI" id="CHEBI:57945"/>
        <dbReference type="EC" id="1.16.1.10"/>
    </reaction>
    <physiologicalReaction direction="right-to-left" evidence="2">
        <dbReference type="Rhea" id="RHEA:15063"/>
    </physiologicalReaction>
</comment>
<comment type="catalytic activity">
    <reaction evidence="2">
        <text>2 a Fe(II)-siderophore + NADP(+) + H(+) = 2 a Fe(III)-siderophore + NADPH</text>
        <dbReference type="Rhea" id="RHEA:28795"/>
        <dbReference type="Rhea" id="RHEA-COMP:11342"/>
        <dbReference type="Rhea" id="RHEA-COMP:11344"/>
        <dbReference type="ChEBI" id="CHEBI:15378"/>
        <dbReference type="ChEBI" id="CHEBI:29033"/>
        <dbReference type="ChEBI" id="CHEBI:29034"/>
        <dbReference type="ChEBI" id="CHEBI:57783"/>
        <dbReference type="ChEBI" id="CHEBI:58349"/>
        <dbReference type="EC" id="1.16.1.10"/>
    </reaction>
    <physiologicalReaction direction="right-to-left" evidence="2">
        <dbReference type="Rhea" id="RHEA:28797"/>
    </physiologicalReaction>
</comment>
<comment type="cofactor">
    <cofactor evidence="2">
        <name>FAD</name>
        <dbReference type="ChEBI" id="CHEBI:57692"/>
    </cofactor>
</comment>
<comment type="subunit">
    <text evidence="5">Monomer in solution.</text>
</comment>
<comment type="similarity">
    <text evidence="4">Belongs to the SIP oxidoreductase family.</text>
</comment>